<accession>Q47956</accession>
<reference key="1">
    <citation type="journal article" date="1995" name="Mol. Microbiol.">
        <title>Cloning and characterization of the genes encoding the hemolysin of Haemophilus ducreyi.</title>
        <authorList>
            <person name="Palmer K.P."/>
            <person name="Munson R.S. Jr."/>
        </authorList>
    </citation>
    <scope>NUCLEOTIDE SEQUENCE [GENOMIC DNA]</scope>
    <source>
        <strain>35000HP / ATCC 700724</strain>
    </source>
</reference>
<reference key="2">
    <citation type="submission" date="2003-06" db="EMBL/GenBank/DDBJ databases">
        <title>The complete genome sequence of Haemophilus ducreyi.</title>
        <authorList>
            <person name="Munson R.S. Jr."/>
            <person name="Ray W.C."/>
            <person name="Mahairas G."/>
            <person name="Sabo P."/>
            <person name="Mungur R."/>
            <person name="Johnson L."/>
            <person name="Nguyen D."/>
            <person name="Wang J."/>
            <person name="Forst C."/>
            <person name="Hood L."/>
        </authorList>
    </citation>
    <scope>NUCLEOTIDE SEQUENCE [LARGE SCALE GENOMIC DNA]</scope>
    <source>
        <strain>35000HP / ATCC 700724</strain>
    </source>
</reference>
<feature type="chain" id="PRO_0000189473" description="2-C-methyl-D-erythritol 2,4-cyclodiphosphate synthase">
    <location>
        <begin position="1"/>
        <end position="160"/>
    </location>
</feature>
<feature type="binding site" evidence="1">
    <location>
        <begin position="9"/>
        <end position="11"/>
    </location>
    <ligand>
        <name>4-CDP-2-C-methyl-D-erythritol 2-phosphate</name>
        <dbReference type="ChEBI" id="CHEBI:57919"/>
    </ligand>
</feature>
<feature type="binding site" evidence="1">
    <location>
        <position position="9"/>
    </location>
    <ligand>
        <name>a divalent metal cation</name>
        <dbReference type="ChEBI" id="CHEBI:60240"/>
    </ligand>
</feature>
<feature type="binding site" evidence="1">
    <location>
        <position position="11"/>
    </location>
    <ligand>
        <name>a divalent metal cation</name>
        <dbReference type="ChEBI" id="CHEBI:60240"/>
    </ligand>
</feature>
<feature type="binding site" evidence="1">
    <location>
        <begin position="35"/>
        <end position="36"/>
    </location>
    <ligand>
        <name>4-CDP-2-C-methyl-D-erythritol 2-phosphate</name>
        <dbReference type="ChEBI" id="CHEBI:57919"/>
    </ligand>
</feature>
<feature type="binding site" evidence="1">
    <location>
        <position position="43"/>
    </location>
    <ligand>
        <name>a divalent metal cation</name>
        <dbReference type="ChEBI" id="CHEBI:60240"/>
    </ligand>
</feature>
<feature type="binding site" evidence="1">
    <location>
        <begin position="57"/>
        <end position="59"/>
    </location>
    <ligand>
        <name>4-CDP-2-C-methyl-D-erythritol 2-phosphate</name>
        <dbReference type="ChEBI" id="CHEBI:57919"/>
    </ligand>
</feature>
<feature type="binding site" evidence="1">
    <location>
        <begin position="62"/>
        <end position="66"/>
    </location>
    <ligand>
        <name>4-CDP-2-C-methyl-D-erythritol 2-phosphate</name>
        <dbReference type="ChEBI" id="CHEBI:57919"/>
    </ligand>
</feature>
<feature type="binding site" evidence="1">
    <location>
        <begin position="133"/>
        <end position="136"/>
    </location>
    <ligand>
        <name>4-CDP-2-C-methyl-D-erythritol 2-phosphate</name>
        <dbReference type="ChEBI" id="CHEBI:57919"/>
    </ligand>
</feature>
<feature type="binding site" evidence="1">
    <location>
        <position position="140"/>
    </location>
    <ligand>
        <name>4-CDP-2-C-methyl-D-erythritol 2-phosphate</name>
        <dbReference type="ChEBI" id="CHEBI:57919"/>
    </ligand>
</feature>
<feature type="binding site" evidence="1">
    <location>
        <position position="143"/>
    </location>
    <ligand>
        <name>4-CDP-2-C-methyl-D-erythritol 2-phosphate</name>
        <dbReference type="ChEBI" id="CHEBI:57919"/>
    </ligand>
</feature>
<feature type="site" description="Transition state stabilizer" evidence="1">
    <location>
        <position position="35"/>
    </location>
</feature>
<feature type="site" description="Transition state stabilizer" evidence="1">
    <location>
        <position position="134"/>
    </location>
</feature>
<organism>
    <name type="scientific">Haemophilus ducreyi (strain 35000HP / ATCC 700724)</name>
    <dbReference type="NCBI Taxonomy" id="233412"/>
    <lineage>
        <taxon>Bacteria</taxon>
        <taxon>Pseudomonadati</taxon>
        <taxon>Pseudomonadota</taxon>
        <taxon>Gammaproteobacteria</taxon>
        <taxon>Pasteurellales</taxon>
        <taxon>Pasteurellaceae</taxon>
        <taxon>Haemophilus</taxon>
    </lineage>
</organism>
<proteinExistence type="inferred from homology"/>
<dbReference type="EC" id="4.6.1.12" evidence="1"/>
<dbReference type="EMBL" id="U32175">
    <property type="protein sequence ID" value="AAC43539.1"/>
    <property type="molecule type" value="Genomic_DNA"/>
</dbReference>
<dbReference type="EMBL" id="AE017143">
    <property type="protein sequence ID" value="AAP96149.1"/>
    <property type="molecule type" value="Genomic_DNA"/>
</dbReference>
<dbReference type="PIR" id="S70845">
    <property type="entry name" value="S70845"/>
</dbReference>
<dbReference type="RefSeq" id="WP_010945198.1">
    <property type="nucleotide sequence ID" value="NC_002940.2"/>
</dbReference>
<dbReference type="SMR" id="Q47956"/>
<dbReference type="STRING" id="233412.HD_1328"/>
<dbReference type="KEGG" id="hdu:HD_1328"/>
<dbReference type="eggNOG" id="COG0245">
    <property type="taxonomic scope" value="Bacteria"/>
</dbReference>
<dbReference type="HOGENOM" id="CLU_084630_2_0_6"/>
<dbReference type="OrthoDB" id="9804336at2"/>
<dbReference type="UniPathway" id="UPA00056">
    <property type="reaction ID" value="UER00095"/>
</dbReference>
<dbReference type="Proteomes" id="UP000001022">
    <property type="component" value="Chromosome"/>
</dbReference>
<dbReference type="GO" id="GO:0008685">
    <property type="term" value="F:2-C-methyl-D-erythritol 2,4-cyclodiphosphate synthase activity"/>
    <property type="evidence" value="ECO:0007669"/>
    <property type="project" value="UniProtKB-UniRule"/>
</dbReference>
<dbReference type="GO" id="GO:0046872">
    <property type="term" value="F:metal ion binding"/>
    <property type="evidence" value="ECO:0007669"/>
    <property type="project" value="UniProtKB-KW"/>
</dbReference>
<dbReference type="GO" id="GO:0019288">
    <property type="term" value="P:isopentenyl diphosphate biosynthetic process, methylerythritol 4-phosphate pathway"/>
    <property type="evidence" value="ECO:0007669"/>
    <property type="project" value="UniProtKB-UniRule"/>
</dbReference>
<dbReference type="GO" id="GO:0016114">
    <property type="term" value="P:terpenoid biosynthetic process"/>
    <property type="evidence" value="ECO:0007669"/>
    <property type="project" value="InterPro"/>
</dbReference>
<dbReference type="CDD" id="cd00554">
    <property type="entry name" value="MECDP_synthase"/>
    <property type="match status" value="1"/>
</dbReference>
<dbReference type="FunFam" id="3.30.1330.50:FF:000001">
    <property type="entry name" value="2-C-methyl-D-erythritol 2,4-cyclodiphosphate synthase"/>
    <property type="match status" value="1"/>
</dbReference>
<dbReference type="Gene3D" id="3.30.1330.50">
    <property type="entry name" value="2-C-methyl-D-erythritol 2,4-cyclodiphosphate synthase"/>
    <property type="match status" value="1"/>
</dbReference>
<dbReference type="HAMAP" id="MF_00107">
    <property type="entry name" value="IspF"/>
    <property type="match status" value="1"/>
</dbReference>
<dbReference type="InterPro" id="IPR003526">
    <property type="entry name" value="MECDP_synthase"/>
</dbReference>
<dbReference type="InterPro" id="IPR020555">
    <property type="entry name" value="MECDP_synthase_CS"/>
</dbReference>
<dbReference type="InterPro" id="IPR036571">
    <property type="entry name" value="MECDP_synthase_sf"/>
</dbReference>
<dbReference type="NCBIfam" id="TIGR00151">
    <property type="entry name" value="ispF"/>
    <property type="match status" value="1"/>
</dbReference>
<dbReference type="PANTHER" id="PTHR43181">
    <property type="entry name" value="2-C-METHYL-D-ERYTHRITOL 2,4-CYCLODIPHOSPHATE SYNTHASE, CHLOROPLASTIC"/>
    <property type="match status" value="1"/>
</dbReference>
<dbReference type="PANTHER" id="PTHR43181:SF1">
    <property type="entry name" value="2-C-METHYL-D-ERYTHRITOL 2,4-CYCLODIPHOSPHATE SYNTHASE, CHLOROPLASTIC"/>
    <property type="match status" value="1"/>
</dbReference>
<dbReference type="Pfam" id="PF02542">
    <property type="entry name" value="YgbB"/>
    <property type="match status" value="1"/>
</dbReference>
<dbReference type="SUPFAM" id="SSF69765">
    <property type="entry name" value="IpsF-like"/>
    <property type="match status" value="1"/>
</dbReference>
<dbReference type="PROSITE" id="PS01350">
    <property type="entry name" value="ISPF"/>
    <property type="match status" value="1"/>
</dbReference>
<gene>
    <name evidence="1" type="primary">ispF</name>
    <name type="ordered locus">HD_1328</name>
</gene>
<protein>
    <recommendedName>
        <fullName evidence="1">2-C-methyl-D-erythritol 2,4-cyclodiphosphate synthase</fullName>
        <shortName evidence="1">MECDP-synthase</shortName>
        <shortName evidence="1">MECPP-synthase</shortName>
        <shortName evidence="1">MECPS</shortName>
        <ecNumber evidence="1">4.6.1.12</ecNumber>
    </recommendedName>
</protein>
<keyword id="KW-0414">Isoprene biosynthesis</keyword>
<keyword id="KW-0456">Lyase</keyword>
<keyword id="KW-0479">Metal-binding</keyword>
<keyword id="KW-1185">Reference proteome</keyword>
<evidence type="ECO:0000255" key="1">
    <source>
        <dbReference type="HAMAP-Rule" id="MF_00107"/>
    </source>
</evidence>
<name>ISPF_HAEDU</name>
<sequence length="160" mass="17437">MIRIGHGFDVHAFGEKRPLIIGGVTIPYHTGFIAHSDGDVALHALTDALLGAAALGDIGKLFPDTDQQYKNIDSRKLLIEAYRQVQTKGYQISNIDITIIAQAPKMRPHIDNMRQLIANDLNCDIDQINIKATTTEKLGFTGRGEGIACEAVALLSKKTV</sequence>
<comment type="function">
    <text evidence="1">Involved in the biosynthesis of isopentenyl diphosphate (IPP) and dimethylallyl diphosphate (DMAPP), two major building blocks of isoprenoid compounds. Catalyzes the conversion of 4-diphosphocytidyl-2-C-methyl-D-erythritol 2-phosphate (CDP-ME2P) to 2-C-methyl-D-erythritol 2,4-cyclodiphosphate (ME-CPP) with a corresponding release of cytidine 5-monophosphate (CMP).</text>
</comment>
<comment type="catalytic activity">
    <reaction evidence="1">
        <text>4-CDP-2-C-methyl-D-erythritol 2-phosphate = 2-C-methyl-D-erythritol 2,4-cyclic diphosphate + CMP</text>
        <dbReference type="Rhea" id="RHEA:23864"/>
        <dbReference type="ChEBI" id="CHEBI:57919"/>
        <dbReference type="ChEBI" id="CHEBI:58483"/>
        <dbReference type="ChEBI" id="CHEBI:60377"/>
        <dbReference type="EC" id="4.6.1.12"/>
    </reaction>
</comment>
<comment type="cofactor">
    <cofactor evidence="1">
        <name>a divalent metal cation</name>
        <dbReference type="ChEBI" id="CHEBI:60240"/>
    </cofactor>
    <text evidence="1">Binds 1 divalent metal cation per subunit.</text>
</comment>
<comment type="pathway">
    <text evidence="1">Isoprenoid biosynthesis; isopentenyl diphosphate biosynthesis via DXP pathway; isopentenyl diphosphate from 1-deoxy-D-xylulose 5-phosphate: step 4/6.</text>
</comment>
<comment type="subunit">
    <text evidence="1">Homotrimer.</text>
</comment>
<comment type="similarity">
    <text evidence="1">Belongs to the IspF family.</text>
</comment>